<accession>Q3B8B2</accession>
<accession>A3KMU0</accession>
<name>COQ9A_XENLA</name>
<keyword id="KW-0446">Lipid-binding</keyword>
<keyword id="KW-0496">Mitochondrion</keyword>
<keyword id="KW-1185">Reference proteome</keyword>
<keyword id="KW-0809">Transit peptide</keyword>
<keyword id="KW-0831">Ubiquinone biosynthesis</keyword>
<dbReference type="EMBL" id="BC106647">
    <property type="protein sequence ID" value="AAI06648.1"/>
    <property type="molecule type" value="mRNA"/>
</dbReference>
<dbReference type="EMBL" id="BC133229">
    <property type="protein sequence ID" value="AAI33230.1"/>
    <property type="molecule type" value="mRNA"/>
</dbReference>
<dbReference type="RefSeq" id="NP_001089120.1">
    <property type="nucleotide sequence ID" value="NM_001095651.1"/>
</dbReference>
<dbReference type="SMR" id="Q3B8B2"/>
<dbReference type="GeneID" id="733404"/>
<dbReference type="KEGG" id="xla:733404"/>
<dbReference type="AGR" id="Xenbase:XB-GENE-948685"/>
<dbReference type="CTD" id="733404"/>
<dbReference type="Xenbase" id="XB-GENE-948685">
    <property type="gene designation" value="coq9.L"/>
</dbReference>
<dbReference type="OrthoDB" id="619536at2759"/>
<dbReference type="UniPathway" id="UPA00232"/>
<dbReference type="Proteomes" id="UP000186698">
    <property type="component" value="Chromosome 4L"/>
</dbReference>
<dbReference type="Bgee" id="733404">
    <property type="expression patterns" value="Expressed in heart and 20 other cell types or tissues"/>
</dbReference>
<dbReference type="GO" id="GO:0005743">
    <property type="term" value="C:mitochondrial inner membrane"/>
    <property type="evidence" value="ECO:0000318"/>
    <property type="project" value="GO_Central"/>
</dbReference>
<dbReference type="GO" id="GO:0019840">
    <property type="term" value="F:isoprenoid binding"/>
    <property type="evidence" value="ECO:0000250"/>
    <property type="project" value="UniProtKB"/>
</dbReference>
<dbReference type="GO" id="GO:0008289">
    <property type="term" value="F:lipid binding"/>
    <property type="evidence" value="ECO:0000250"/>
    <property type="project" value="UniProtKB"/>
</dbReference>
<dbReference type="GO" id="GO:0042803">
    <property type="term" value="F:protein homodimerization activity"/>
    <property type="evidence" value="ECO:0000250"/>
    <property type="project" value="UniProtKB"/>
</dbReference>
<dbReference type="GO" id="GO:0006744">
    <property type="term" value="P:ubiquinone biosynthetic process"/>
    <property type="evidence" value="ECO:0000250"/>
    <property type="project" value="UniProtKB"/>
</dbReference>
<dbReference type="FunFam" id="1.10.357.10:FF:000004">
    <property type="entry name" value="Ubiquinone biosynthesis protein COQ9, mitochondrial"/>
    <property type="match status" value="1"/>
</dbReference>
<dbReference type="Gene3D" id="1.10.357.10">
    <property type="entry name" value="Tetracycline Repressor, domain 2"/>
    <property type="match status" value="1"/>
</dbReference>
<dbReference type="InterPro" id="IPR013718">
    <property type="entry name" value="COQ9_C"/>
</dbReference>
<dbReference type="InterPro" id="IPR048674">
    <property type="entry name" value="COQ9_HTH"/>
</dbReference>
<dbReference type="InterPro" id="IPR012762">
    <property type="entry name" value="Ubiq_biosynth_COQ9"/>
</dbReference>
<dbReference type="NCBIfam" id="TIGR02396">
    <property type="entry name" value="diverge_rpsU"/>
    <property type="match status" value="1"/>
</dbReference>
<dbReference type="PANTHER" id="PTHR21427">
    <property type="entry name" value="UBIQUINONE BIOSYNTHESIS PROTEIN COQ9, MITOCHONDRIAL"/>
    <property type="match status" value="1"/>
</dbReference>
<dbReference type="PANTHER" id="PTHR21427:SF19">
    <property type="entry name" value="UBIQUINONE BIOSYNTHESIS PROTEIN COQ9, MITOCHONDRIAL"/>
    <property type="match status" value="1"/>
</dbReference>
<dbReference type="Pfam" id="PF08511">
    <property type="entry name" value="COQ9"/>
    <property type="match status" value="1"/>
</dbReference>
<dbReference type="Pfam" id="PF21392">
    <property type="entry name" value="COQ9_N"/>
    <property type="match status" value="1"/>
</dbReference>
<evidence type="ECO:0000250" key="1">
    <source>
        <dbReference type="UniProtKB" id="O75208"/>
    </source>
</evidence>
<evidence type="ECO:0000250" key="2">
    <source>
        <dbReference type="UniProtKB" id="Q8K1Z0"/>
    </source>
</evidence>
<evidence type="ECO:0000255" key="3"/>
<evidence type="ECO:0000256" key="4">
    <source>
        <dbReference type="SAM" id="MobiDB-lite"/>
    </source>
</evidence>
<evidence type="ECO:0000305" key="5"/>
<gene>
    <name type="primary">coq9-a</name>
</gene>
<reference key="1">
    <citation type="submission" date="2007-02" db="EMBL/GenBank/DDBJ databases">
        <authorList>
            <consortium name="NIH - Xenopus Gene Collection (XGC) project"/>
        </authorList>
    </citation>
    <scope>NUCLEOTIDE SEQUENCE [LARGE SCALE MRNA]</scope>
    <source>
        <tissue>Brain</tissue>
        <tissue>Testis</tissue>
    </source>
</reference>
<feature type="transit peptide" description="Mitochondrion" evidence="3">
    <location>
        <begin position="1"/>
        <end position="46"/>
    </location>
</feature>
<feature type="chain" id="PRO_0000228640" description="Ubiquinone biosynthesis protein COQ9-A, mitochondrial">
    <location>
        <begin position="47"/>
        <end position="317"/>
    </location>
</feature>
<feature type="region of interest" description="Disordered" evidence="4">
    <location>
        <begin position="50"/>
        <end position="97"/>
    </location>
</feature>
<feature type="compositionally biased region" description="Polar residues" evidence="4">
    <location>
        <begin position="53"/>
        <end position="63"/>
    </location>
</feature>
<feature type="compositionally biased region" description="Acidic residues" evidence="4">
    <location>
        <begin position="85"/>
        <end position="96"/>
    </location>
</feature>
<feature type="binding site" evidence="1">
    <location>
        <position position="243"/>
    </location>
    <ligand>
        <name>a 1,2-diacylglycero-3-phosphoethanolamine</name>
        <dbReference type="ChEBI" id="CHEBI:57613"/>
    </ligand>
</feature>
<protein>
    <recommendedName>
        <fullName evidence="1">Ubiquinone biosynthesis protein COQ9-A, mitochondrial</fullName>
    </recommendedName>
</protein>
<comment type="function">
    <text evidence="1">Membrane-associated protein that warps the membrane surface to access and bind aromatic isoprenes with high specificity, including ubiquinone (CoQ) isoprene intermediates and presents them directly to COQ7, therefore facilitating the COQ7-mediated hydroxylase step. Participates in the biosynthesis of coenzyme Q, also named ubiquinone, an essential lipid-soluble electron transporter for aerobic cellular respiration.</text>
</comment>
<comment type="pathway">
    <text evidence="2">Cofactor biosynthesis; ubiquinone biosynthesis.</text>
</comment>
<comment type="subunit">
    <text evidence="1">Homodimer. Heterodimer; two heterodimers of COQ7:COQ9 come together on the same side of the lipid pseudo-bilayer and form a curved tetramer with a hydrophobic surface suitable for membrane interaction. These two tetramers assemble into a soluble octamer with a pseudo-bilayer of lipids captured within. Interacts with COQ7; this interaction allows ubiquinone (CoQ) isoprene intermediates presentation to COQ7 and facilitates the COQ7-mediated hydroxylase step.</text>
</comment>
<comment type="subcellular location">
    <subcellularLocation>
        <location evidence="2">Mitochondrion</location>
    </subcellularLocation>
    <text evidence="1">Associates with cardiolipin-rich membranes which leads to the lipid bilayer deformation and then accessing to membrane-bound lipids.</text>
</comment>
<comment type="domain">
    <text evidence="1">Structurally similar to the bacterial FadR protein (fatty acid metabolism regulator protein).</text>
</comment>
<comment type="similarity">
    <text evidence="5">Belongs to the COQ9 family.</text>
</comment>
<proteinExistence type="evidence at transcript level"/>
<sequence>MAASVTRVLKGAGGRQLLLMVARRRPVLMQPFLLMPRKFWVSSALRSEDQRQPPFSASSTHAETQGHAEEQYQQKQPPPRYTDQAGEESEGYESEEQLQQQILSAALQFVPDFGWSADAIAEGAKSLDMSAAAAGMFEDGGSELILHFVTQCNLQLTELLEKEQKLVQLGTSEKKPTAQFLRDAVEARLRMHIPYIEHWPQALGMLLLPRNIPSSLKLLTAMVDDIWHYAGDQSTDVSWYTRRAVLTGIYNTTELVMLQDSSPDFEDTWKFLENRISEAMTMGDSVKQVASTGEAVIQGLMGAAVTLKNLTGLNQRR</sequence>
<organism>
    <name type="scientific">Xenopus laevis</name>
    <name type="common">African clawed frog</name>
    <dbReference type="NCBI Taxonomy" id="8355"/>
    <lineage>
        <taxon>Eukaryota</taxon>
        <taxon>Metazoa</taxon>
        <taxon>Chordata</taxon>
        <taxon>Craniata</taxon>
        <taxon>Vertebrata</taxon>
        <taxon>Euteleostomi</taxon>
        <taxon>Amphibia</taxon>
        <taxon>Batrachia</taxon>
        <taxon>Anura</taxon>
        <taxon>Pipoidea</taxon>
        <taxon>Pipidae</taxon>
        <taxon>Xenopodinae</taxon>
        <taxon>Xenopus</taxon>
        <taxon>Xenopus</taxon>
    </lineage>
</organism>